<reference evidence="7" key="1">
    <citation type="journal article" date="1999" name="Development">
        <title>C. elegans MAC-1, an essential member of the AAA family of ATPases, can bind CED-4 and prevent cell death.</title>
        <authorList>
            <person name="Wu D."/>
            <person name="Chen P.J."/>
            <person name="Chen S."/>
            <person name="Hu Y."/>
            <person name="Nunez G."/>
            <person name="Ellis R.E."/>
        </authorList>
    </citation>
    <scope>NUCLEOTIDE SEQUENCE [MRNA]</scope>
    <scope>FUNCTION</scope>
    <scope>IDENTIFICATION IN A CED-4/ CED-3 AND CED-4/CED-9 COMPLEX</scope>
    <scope>INTERACTION WITH CED-4</scope>
    <scope>DISRUPTION PHENOTYPE</scope>
</reference>
<reference evidence="8" key="2">
    <citation type="journal article" date="1998" name="Science">
        <title>Genome sequence of the nematode C. elegans: a platform for investigating biology.</title>
        <authorList>
            <consortium name="The C. elegans sequencing consortium"/>
        </authorList>
    </citation>
    <scope>NUCLEOTIDE SEQUENCE [LARGE SCALE GENOMIC DNA]</scope>
    <source>
        <strain evidence="8">Bristol N2</strain>
    </source>
</reference>
<name>MAC1_CAEEL</name>
<organism evidence="8">
    <name type="scientific">Caenorhabditis elegans</name>
    <dbReference type="NCBI Taxonomy" id="6239"/>
    <lineage>
        <taxon>Eukaryota</taxon>
        <taxon>Metazoa</taxon>
        <taxon>Ecdysozoa</taxon>
        <taxon>Nematoda</taxon>
        <taxon>Chromadorea</taxon>
        <taxon>Rhabditida</taxon>
        <taxon>Rhabditina</taxon>
        <taxon>Rhabditomorpha</taxon>
        <taxon>Rhabditoidea</taxon>
        <taxon>Rhabditidae</taxon>
        <taxon>Peloderinae</taxon>
        <taxon>Caenorhabditis</taxon>
    </lineage>
</organism>
<comment type="function">
    <text evidence="5">Probably together with ced-9, plays a modest role in preventing ced-4 and caspase ced-3-mediated apoptosis.</text>
</comment>
<comment type="subunit">
    <text evidence="5">Found in a complex composed of ced-3, ced-4 and mac-1 or of ced-9, ced-4 and mac-1. Within the complex, interacts with ced-4.</text>
</comment>
<comment type="interaction">
    <interactant intactId="EBI-2005767">
        <id>Q9NAG4</id>
    </interactant>
    <interactant intactId="EBI-536271">
        <id>P30429-2</id>
        <label>ced-4</label>
    </interactant>
    <organismsDiffer>false</organismsDiffer>
    <experiments>8</experiments>
</comment>
<comment type="interaction">
    <interactant intactId="EBI-2005767">
        <id>Q9NAG4</id>
    </interactant>
    <interactant intactId="EBI-330089">
        <id>Q9U2Q9</id>
        <label>gsk-3</label>
    </interactant>
    <organismsDiffer>false</organismsDiffer>
    <experiments>3</experiments>
</comment>
<comment type="disruption phenotype">
    <text evidence="5">RNAi-mediated knockdown causes an arrest at the L2-L3 larval stages with few adults reaching adulthood. Abnormal presence of vacuoles in the intestine with some intestinal sections almost completely degraded. RNAi-mediated knockdown in a ced-3 (n718) or ced-4 (n1416) mutant background causes a similar arrest at the L2-L3 larval stages.</text>
</comment>
<comment type="similarity">
    <text evidence="7">Belongs to the AAA ATPase family.</text>
</comment>
<gene>
    <name evidence="6" type="primary">mac-1</name>
    <name evidence="9" type="ORF">Y48C3A.7</name>
</gene>
<evidence type="ECO:0000250" key="1">
    <source>
        <dbReference type="UniProtKB" id="O15381"/>
    </source>
</evidence>
<evidence type="ECO:0000255" key="2"/>
<evidence type="ECO:0000255" key="3">
    <source>
        <dbReference type="PROSITE-ProRule" id="PRU00289"/>
    </source>
</evidence>
<evidence type="ECO:0000256" key="4">
    <source>
        <dbReference type="SAM" id="MobiDB-lite"/>
    </source>
</evidence>
<evidence type="ECO:0000269" key="5">
    <source>
    </source>
</evidence>
<evidence type="ECO:0000303" key="6">
    <source>
    </source>
</evidence>
<evidence type="ECO:0000305" key="7"/>
<evidence type="ECO:0000312" key="8">
    <source>
        <dbReference type="Proteomes" id="UP000001940"/>
    </source>
</evidence>
<evidence type="ECO:0000312" key="9">
    <source>
        <dbReference type="WormBase" id="Y48C3A.7"/>
    </source>
</evidence>
<accession>Q9NAG4</accession>
<accession>Q9U8K0</accession>
<keyword id="KW-0053">Apoptosis</keyword>
<keyword id="KW-0067">ATP-binding</keyword>
<keyword id="KW-0175">Coiled coil</keyword>
<keyword id="KW-0547">Nucleotide-binding</keyword>
<keyword id="KW-1185">Reference proteome</keyword>
<proteinExistence type="evidence at protein level"/>
<dbReference type="EMBL" id="AF059715">
    <property type="protein sequence ID" value="AAF05624.1"/>
    <property type="molecule type" value="mRNA"/>
</dbReference>
<dbReference type="EMBL" id="BX284602">
    <property type="protein sequence ID" value="CAB55106.2"/>
    <property type="molecule type" value="Genomic_DNA"/>
</dbReference>
<dbReference type="PIR" id="T31591">
    <property type="entry name" value="T31591"/>
</dbReference>
<dbReference type="RefSeq" id="NP_496814.1">
    <property type="nucleotide sequence ID" value="NM_064413.9"/>
</dbReference>
<dbReference type="SMR" id="Q9NAG4"/>
<dbReference type="ComplexPortal" id="CPX-1358">
    <property type="entry name" value="ced-3-ced-4-mac-1 complex"/>
</dbReference>
<dbReference type="ComplexPortal" id="CPX-1359">
    <property type="entry name" value="ced-4-ced-9-mac-1 complex"/>
</dbReference>
<dbReference type="FunCoup" id="Q9NAG4">
    <property type="interactions" value="3497"/>
</dbReference>
<dbReference type="IntAct" id="Q9NAG4">
    <property type="interactions" value="4"/>
</dbReference>
<dbReference type="STRING" id="6239.Y48C3A.7.1"/>
<dbReference type="PaxDb" id="6239-Y48C3A.7"/>
<dbReference type="PeptideAtlas" id="Q9NAG4"/>
<dbReference type="EnsemblMetazoa" id="Y48C3A.7.1">
    <property type="protein sequence ID" value="Y48C3A.7.1"/>
    <property type="gene ID" value="WBGene00003119"/>
</dbReference>
<dbReference type="GeneID" id="174974"/>
<dbReference type="KEGG" id="cel:CELE_Y48C3A.7"/>
<dbReference type="UCSC" id="Y48C3A.7">
    <property type="organism name" value="c. elegans"/>
</dbReference>
<dbReference type="AGR" id="WB:WBGene00003119"/>
<dbReference type="CTD" id="174974"/>
<dbReference type="WormBase" id="Y48C3A.7">
    <property type="protein sequence ID" value="CE28132"/>
    <property type="gene ID" value="WBGene00003119"/>
    <property type="gene designation" value="mac-1"/>
</dbReference>
<dbReference type="eggNOG" id="KOG0733">
    <property type="taxonomic scope" value="Eukaryota"/>
</dbReference>
<dbReference type="GeneTree" id="ENSGT00570000079239"/>
<dbReference type="HOGENOM" id="CLU_000688_8_3_1"/>
<dbReference type="InParanoid" id="Q9NAG4"/>
<dbReference type="OMA" id="GLWSTHR"/>
<dbReference type="OrthoDB" id="2187at2759"/>
<dbReference type="PhylomeDB" id="Q9NAG4"/>
<dbReference type="SignaLink" id="Q9NAG4"/>
<dbReference type="PRO" id="PR:Q9NAG4"/>
<dbReference type="Proteomes" id="UP000001940">
    <property type="component" value="Chromosome II"/>
</dbReference>
<dbReference type="Bgee" id="WBGene00003119">
    <property type="expression patterns" value="Expressed in pharyngeal muscle cell (C elegans) and 4 other cell types or tissues"/>
</dbReference>
<dbReference type="GO" id="GO:0008303">
    <property type="term" value="C:caspase complex"/>
    <property type="evidence" value="ECO:0000314"/>
    <property type="project" value="ComplexPortal"/>
</dbReference>
<dbReference type="GO" id="GO:0005634">
    <property type="term" value="C:nucleus"/>
    <property type="evidence" value="ECO:0000318"/>
    <property type="project" value="GO_Central"/>
</dbReference>
<dbReference type="GO" id="GO:0005524">
    <property type="term" value="F:ATP binding"/>
    <property type="evidence" value="ECO:0007669"/>
    <property type="project" value="UniProtKB-KW"/>
</dbReference>
<dbReference type="GO" id="GO:0016887">
    <property type="term" value="F:ATP hydrolysis activity"/>
    <property type="evidence" value="ECO:0000318"/>
    <property type="project" value="GO_Central"/>
</dbReference>
<dbReference type="GO" id="GO:1990275">
    <property type="term" value="F:preribosome binding"/>
    <property type="evidence" value="ECO:0000318"/>
    <property type="project" value="GO_Central"/>
</dbReference>
<dbReference type="GO" id="GO:0006915">
    <property type="term" value="P:apoptotic process"/>
    <property type="evidence" value="ECO:0007669"/>
    <property type="project" value="UniProtKB-KW"/>
</dbReference>
<dbReference type="GO" id="GO:0019915">
    <property type="term" value="P:lipid storage"/>
    <property type="evidence" value="ECO:0000315"/>
    <property type="project" value="WormBase"/>
</dbReference>
<dbReference type="GO" id="GO:0043066">
    <property type="term" value="P:negative regulation of apoptotic process"/>
    <property type="evidence" value="ECO:0000315"/>
    <property type="project" value="UniProtKB"/>
</dbReference>
<dbReference type="GO" id="GO:1900118">
    <property type="term" value="P:negative regulation of execution phase of apoptosis"/>
    <property type="evidence" value="ECO:0000315"/>
    <property type="project" value="ComplexPortal"/>
</dbReference>
<dbReference type="GO" id="GO:0061063">
    <property type="term" value="P:positive regulation of nematode larval development"/>
    <property type="evidence" value="ECO:0000315"/>
    <property type="project" value="UniProtKB"/>
</dbReference>
<dbReference type="GO" id="GO:0042254">
    <property type="term" value="P:ribosome biogenesis"/>
    <property type="evidence" value="ECO:0000318"/>
    <property type="project" value="GO_Central"/>
</dbReference>
<dbReference type="CDD" id="cd19530">
    <property type="entry name" value="RecA-like_NVL_r2-like"/>
    <property type="match status" value="1"/>
</dbReference>
<dbReference type="FunFam" id="1.10.8.60:FF:000185">
    <property type="entry name" value="CBN-MAC-1 protein"/>
    <property type="match status" value="1"/>
</dbReference>
<dbReference type="FunFam" id="3.40.50.300:FF:000149">
    <property type="entry name" value="Nuclear valosin-containing protein-like"/>
    <property type="match status" value="1"/>
</dbReference>
<dbReference type="FunFam" id="3.40.50.300:FF:000365">
    <property type="entry name" value="Ribosome biogenesis ATPase RIX7"/>
    <property type="match status" value="1"/>
</dbReference>
<dbReference type="FunFam" id="1.10.8.60:FF:000112">
    <property type="entry name" value="Smallminded, isoform A"/>
    <property type="match status" value="1"/>
</dbReference>
<dbReference type="Gene3D" id="1.10.10.2010">
    <property type="match status" value="1"/>
</dbReference>
<dbReference type="Gene3D" id="1.10.8.60">
    <property type="match status" value="2"/>
</dbReference>
<dbReference type="Gene3D" id="3.40.50.300">
    <property type="entry name" value="P-loop containing nucleotide triphosphate hydrolases"/>
    <property type="match status" value="2"/>
</dbReference>
<dbReference type="InterPro" id="IPR003593">
    <property type="entry name" value="AAA+_ATPase"/>
</dbReference>
<dbReference type="InterPro" id="IPR050168">
    <property type="entry name" value="AAA_ATPase_domain"/>
</dbReference>
<dbReference type="InterPro" id="IPR041569">
    <property type="entry name" value="AAA_lid_3"/>
</dbReference>
<dbReference type="InterPro" id="IPR003959">
    <property type="entry name" value="ATPase_AAA_core"/>
</dbReference>
<dbReference type="InterPro" id="IPR003960">
    <property type="entry name" value="ATPase_AAA_CS"/>
</dbReference>
<dbReference type="InterPro" id="IPR038100">
    <property type="entry name" value="NLV2_N_sf"/>
</dbReference>
<dbReference type="InterPro" id="IPR031996">
    <property type="entry name" value="NVL2_nucleolin-bd"/>
</dbReference>
<dbReference type="InterPro" id="IPR027417">
    <property type="entry name" value="P-loop_NTPase"/>
</dbReference>
<dbReference type="PANTHER" id="PTHR23077">
    <property type="entry name" value="AAA-FAMILY ATPASE"/>
    <property type="match status" value="1"/>
</dbReference>
<dbReference type="PANTHER" id="PTHR23077:SF171">
    <property type="entry name" value="NUCLEAR VALOSIN-CONTAINING PROTEIN-LIKE"/>
    <property type="match status" value="1"/>
</dbReference>
<dbReference type="Pfam" id="PF00004">
    <property type="entry name" value="AAA"/>
    <property type="match status" value="2"/>
</dbReference>
<dbReference type="Pfam" id="PF17862">
    <property type="entry name" value="AAA_lid_3"/>
    <property type="match status" value="2"/>
</dbReference>
<dbReference type="Pfam" id="PF16725">
    <property type="entry name" value="Nucleolin_bd"/>
    <property type="match status" value="1"/>
</dbReference>
<dbReference type="SMART" id="SM00382">
    <property type="entry name" value="AAA"/>
    <property type="match status" value="2"/>
</dbReference>
<dbReference type="SUPFAM" id="SSF52540">
    <property type="entry name" value="P-loop containing nucleoside triphosphate hydrolases"/>
    <property type="match status" value="2"/>
</dbReference>
<dbReference type="PROSITE" id="PS00674">
    <property type="entry name" value="AAA"/>
    <property type="match status" value="1"/>
</dbReference>
<protein>
    <recommendedName>
        <fullName evidence="7">Protein mac-1</fullName>
    </recommendedName>
    <alternativeName>
        <fullName evidence="6">Member of AAA family that binds ced-4</fullName>
    </alternativeName>
</protein>
<sequence>MPGGMGFPSDPALLPRVQAHIRKFPGTKYFKPELVAYDLQQEHPEYQRKNHKVFMGMVREALERIQLVAKEENDEKMEEKEAMDDVQEIPIVKALETRKRKAPAAGRKSTGQAAAAKEVVLSDDSEDERAARQLEKQIESLKTNRANKTVLNLYTKKSAPSTPVSTPKNQATKKPPGASAAPPALPRGLGAVSDTISPRESHVKFEHIGGADRQFLEVCRLAMHLKRPKTFATLGVDPPRGFIVHGPPGCGKTMFAQAVAGELAIPMLQLAATELVSGVSGETEEKIRRLFDTAKQNSPCILILDDIDAIAPRRETAQREMERRVVSQLCSSLDELVLPPREKPLKDQLTFGDDGSVAIIGDSPTAAGAGVLVIGTTSRPDAVDGGLRRAGRFENEISLGIPDETAREKILEKICKVNLAGDVTLKQIAKLTPGYVGADLQALIREAAKVAIDRVFDTIVVKNEGHKNLTVEQIKEELDRVLAWLQGDDDPSALSELNGGLQISFEDFERALSTIQPAAKREGFATVPDVSWDDIGALVEVRKQLEWSILYPIKRADDFAALGIDCRPQGILLCGPPGCGKTLLAKAVANETGMNFISVKGPELLNMYVGESERAVRTVFQRARDSQPCVIFFDEIDALVPKRSHGESSGGARLVNQLLTEMDGVEGRQKVFLIGATNRPDIVDAAILRPGRLDKILFVDFPSVEDRVDILRKSTKNGTRPMLGEDIDFHEIAQLPELAGFTGADLAALIHESSLLALQARVLENDESVKGVGMRHFREAASRIRPSVTEADRKKYEHMKKIYGLKQATPPSV</sequence>
<feature type="chain" id="PRO_0000441159" description="Protein mac-1">
    <location>
        <begin position="1"/>
        <end position="813"/>
    </location>
</feature>
<feature type="region of interest" description="Disordered" evidence="4">
    <location>
        <begin position="97"/>
        <end position="131"/>
    </location>
</feature>
<feature type="region of interest" description="Disordered" evidence="4">
    <location>
        <begin position="152"/>
        <end position="193"/>
    </location>
</feature>
<feature type="coiled-coil region" evidence="2">
    <location>
        <begin position="58"/>
        <end position="89"/>
    </location>
</feature>
<feature type="coiled-coil region" evidence="2">
    <location>
        <begin position="122"/>
        <end position="152"/>
    </location>
</feature>
<feature type="compositionally biased region" description="Polar residues" evidence="4">
    <location>
        <begin position="158"/>
        <end position="172"/>
    </location>
</feature>
<feature type="compositionally biased region" description="Low complexity" evidence="4">
    <location>
        <begin position="175"/>
        <end position="191"/>
    </location>
</feature>
<feature type="binding site" evidence="3">
    <location>
        <begin position="246"/>
        <end position="253"/>
    </location>
    <ligand>
        <name>ATP</name>
        <dbReference type="ChEBI" id="CHEBI:30616"/>
    </ligand>
</feature>
<feature type="binding site" evidence="1">
    <location>
        <begin position="575"/>
        <end position="582"/>
    </location>
    <ligand>
        <name>ATP</name>
        <dbReference type="ChEBI" id="CHEBI:30616"/>
    </ligand>
</feature>
<feature type="sequence conflict" description="In Ref. 1; AAF05624." evidence="7" ref="1">
    <original>GLRRAGRFE</original>
    <variation>RLRRTGRFQ</variation>
    <location>
        <begin position="386"/>
        <end position="394"/>
    </location>
</feature>
<feature type="sequence conflict" description="In Ref. 1; AAF05624." evidence="7" ref="1">
    <original>I</original>
    <variation>F</variation>
    <location>
        <position position="597"/>
    </location>
</feature>
<feature type="sequence conflict" description="In Ref. 1; AAF05624." evidence="7" ref="1">
    <original>ALIHES</original>
    <variation>VFIHEL</variation>
    <location>
        <begin position="748"/>
        <end position="753"/>
    </location>
</feature>